<gene>
    <name evidence="1" type="primary">secB</name>
    <name type="ordered locus">BPSL0446</name>
</gene>
<comment type="function">
    <text evidence="1">One of the proteins required for the normal export of preproteins out of the cell cytoplasm. It is a molecular chaperone that binds to a subset of precursor proteins, maintaining them in a translocation-competent state. It also specifically binds to its receptor SecA.</text>
</comment>
<comment type="subunit">
    <text evidence="1">Homotetramer, a dimer of dimers. One homotetramer interacts with 1 SecA dimer.</text>
</comment>
<comment type="subcellular location">
    <subcellularLocation>
        <location evidence="1">Cytoplasm</location>
    </subcellularLocation>
</comment>
<comment type="similarity">
    <text evidence="1">Belongs to the SecB family.</text>
</comment>
<keyword id="KW-0143">Chaperone</keyword>
<keyword id="KW-0963">Cytoplasm</keyword>
<keyword id="KW-0653">Protein transport</keyword>
<keyword id="KW-1185">Reference proteome</keyword>
<keyword id="KW-0811">Translocation</keyword>
<keyword id="KW-0813">Transport</keyword>
<protein>
    <recommendedName>
        <fullName evidence="1">Protein-export protein SecB</fullName>
    </recommendedName>
</protein>
<organism>
    <name type="scientific">Burkholderia pseudomallei (strain K96243)</name>
    <dbReference type="NCBI Taxonomy" id="272560"/>
    <lineage>
        <taxon>Bacteria</taxon>
        <taxon>Pseudomonadati</taxon>
        <taxon>Pseudomonadota</taxon>
        <taxon>Betaproteobacteria</taxon>
        <taxon>Burkholderiales</taxon>
        <taxon>Burkholderiaceae</taxon>
        <taxon>Burkholderia</taxon>
        <taxon>pseudomallei group</taxon>
    </lineage>
</organism>
<evidence type="ECO:0000255" key="1">
    <source>
        <dbReference type="HAMAP-Rule" id="MF_00821"/>
    </source>
</evidence>
<accession>Q63XU4</accession>
<proteinExistence type="inferred from homology"/>
<sequence>MSDVENQPFFNIQRIYLKDLSLEQPNSPAIFLEQEMPAVEVEVDVKAERLAENVYEIVVAGTVTAKVREKVAFLVEAKQAGIFDIRNIPAEQIDPLCGIACPTILFPYLRSNIADSITRAGFPPIHLAEINFQALYEQRLAEISQQQQQGGAPNGTTLN</sequence>
<reference key="1">
    <citation type="journal article" date="2004" name="Proc. Natl. Acad. Sci. U.S.A.">
        <title>Genomic plasticity of the causative agent of melioidosis, Burkholderia pseudomallei.</title>
        <authorList>
            <person name="Holden M.T.G."/>
            <person name="Titball R.W."/>
            <person name="Peacock S.J."/>
            <person name="Cerdeno-Tarraga A.-M."/>
            <person name="Atkins T."/>
            <person name="Crossman L.C."/>
            <person name="Pitt T."/>
            <person name="Churcher C."/>
            <person name="Mungall K.L."/>
            <person name="Bentley S.D."/>
            <person name="Sebaihia M."/>
            <person name="Thomson N.R."/>
            <person name="Bason N."/>
            <person name="Beacham I.R."/>
            <person name="Brooks K."/>
            <person name="Brown K.A."/>
            <person name="Brown N.F."/>
            <person name="Challis G.L."/>
            <person name="Cherevach I."/>
            <person name="Chillingworth T."/>
            <person name="Cronin A."/>
            <person name="Crossett B."/>
            <person name="Davis P."/>
            <person name="DeShazer D."/>
            <person name="Feltwell T."/>
            <person name="Fraser A."/>
            <person name="Hance Z."/>
            <person name="Hauser H."/>
            <person name="Holroyd S."/>
            <person name="Jagels K."/>
            <person name="Keith K.E."/>
            <person name="Maddison M."/>
            <person name="Moule S."/>
            <person name="Price C."/>
            <person name="Quail M.A."/>
            <person name="Rabbinowitsch E."/>
            <person name="Rutherford K."/>
            <person name="Sanders M."/>
            <person name="Simmonds M."/>
            <person name="Songsivilai S."/>
            <person name="Stevens K."/>
            <person name="Tumapa S."/>
            <person name="Vesaratchavest M."/>
            <person name="Whitehead S."/>
            <person name="Yeats C."/>
            <person name="Barrell B.G."/>
            <person name="Oyston P.C.F."/>
            <person name="Parkhill J."/>
        </authorList>
    </citation>
    <scope>NUCLEOTIDE SEQUENCE [LARGE SCALE GENOMIC DNA]</scope>
    <source>
        <strain>K96243</strain>
    </source>
</reference>
<dbReference type="EMBL" id="BX571965">
    <property type="protein sequence ID" value="CAH34434.1"/>
    <property type="molecule type" value="Genomic_DNA"/>
</dbReference>
<dbReference type="RefSeq" id="WP_004198004.1">
    <property type="nucleotide sequence ID" value="NZ_CP009538.1"/>
</dbReference>
<dbReference type="RefSeq" id="YP_107071.1">
    <property type="nucleotide sequence ID" value="NC_006350.1"/>
</dbReference>
<dbReference type="SMR" id="Q63XU4"/>
<dbReference type="STRING" id="272560.BPSL0446"/>
<dbReference type="GeneID" id="93058964"/>
<dbReference type="KEGG" id="bps:BPSL0446"/>
<dbReference type="PATRIC" id="fig|272560.51.peg.1212"/>
<dbReference type="eggNOG" id="COG1952">
    <property type="taxonomic scope" value="Bacteria"/>
</dbReference>
<dbReference type="Proteomes" id="UP000000605">
    <property type="component" value="Chromosome 1"/>
</dbReference>
<dbReference type="GO" id="GO:0005737">
    <property type="term" value="C:cytoplasm"/>
    <property type="evidence" value="ECO:0007669"/>
    <property type="project" value="UniProtKB-SubCell"/>
</dbReference>
<dbReference type="GO" id="GO:0051082">
    <property type="term" value="F:unfolded protein binding"/>
    <property type="evidence" value="ECO:0007669"/>
    <property type="project" value="InterPro"/>
</dbReference>
<dbReference type="GO" id="GO:0006457">
    <property type="term" value="P:protein folding"/>
    <property type="evidence" value="ECO:0007669"/>
    <property type="project" value="UniProtKB-UniRule"/>
</dbReference>
<dbReference type="GO" id="GO:0051262">
    <property type="term" value="P:protein tetramerization"/>
    <property type="evidence" value="ECO:0007669"/>
    <property type="project" value="InterPro"/>
</dbReference>
<dbReference type="GO" id="GO:0015031">
    <property type="term" value="P:protein transport"/>
    <property type="evidence" value="ECO:0007669"/>
    <property type="project" value="UniProtKB-UniRule"/>
</dbReference>
<dbReference type="Gene3D" id="3.10.420.10">
    <property type="entry name" value="SecB-like"/>
    <property type="match status" value="1"/>
</dbReference>
<dbReference type="HAMAP" id="MF_00821">
    <property type="entry name" value="SecB"/>
    <property type="match status" value="1"/>
</dbReference>
<dbReference type="InterPro" id="IPR003708">
    <property type="entry name" value="SecB"/>
</dbReference>
<dbReference type="InterPro" id="IPR035958">
    <property type="entry name" value="SecB-like_sf"/>
</dbReference>
<dbReference type="NCBIfam" id="NF004392">
    <property type="entry name" value="PRK05751.1-3"/>
    <property type="match status" value="1"/>
</dbReference>
<dbReference type="NCBIfam" id="NF004394">
    <property type="entry name" value="PRK05751.1-5"/>
    <property type="match status" value="1"/>
</dbReference>
<dbReference type="NCBIfam" id="TIGR00809">
    <property type="entry name" value="secB"/>
    <property type="match status" value="1"/>
</dbReference>
<dbReference type="PANTHER" id="PTHR36918">
    <property type="match status" value="1"/>
</dbReference>
<dbReference type="PANTHER" id="PTHR36918:SF1">
    <property type="entry name" value="PROTEIN-EXPORT PROTEIN SECB"/>
    <property type="match status" value="1"/>
</dbReference>
<dbReference type="Pfam" id="PF02556">
    <property type="entry name" value="SecB"/>
    <property type="match status" value="1"/>
</dbReference>
<dbReference type="PRINTS" id="PR01594">
    <property type="entry name" value="SECBCHAPRONE"/>
</dbReference>
<dbReference type="SUPFAM" id="SSF54611">
    <property type="entry name" value="SecB-like"/>
    <property type="match status" value="1"/>
</dbReference>
<feature type="chain" id="PRO_0000055359" description="Protein-export protein SecB">
    <location>
        <begin position="1"/>
        <end position="159"/>
    </location>
</feature>
<name>SECB_BURPS</name>